<feature type="chain" id="PRO_0000384943" description="Protein SEY1 homolog">
    <location>
        <begin position="1"/>
        <end position="894"/>
    </location>
</feature>
<feature type="topological domain" description="Cytoplasmic" evidence="1">
    <location>
        <begin position="1"/>
        <end position="800"/>
    </location>
</feature>
<feature type="transmembrane region" description="Helical" evidence="1">
    <location>
        <begin position="801"/>
        <end position="821"/>
    </location>
</feature>
<feature type="topological domain" description="Lumenal" evidence="1">
    <location>
        <begin position="822"/>
        <end position="824"/>
    </location>
</feature>
<feature type="transmembrane region" description="Helical" evidence="1">
    <location>
        <begin position="825"/>
        <end position="845"/>
    </location>
</feature>
<feature type="topological domain" description="Cytoplasmic" evidence="1">
    <location>
        <begin position="846"/>
        <end position="894"/>
    </location>
</feature>
<feature type="domain" description="GB1/RHD3-type G" evidence="2">
    <location>
        <begin position="138"/>
        <end position="361"/>
    </location>
</feature>
<feature type="region of interest" description="Disordered" evidence="3">
    <location>
        <begin position="1"/>
        <end position="97"/>
    </location>
</feature>
<feature type="coiled-coil region" evidence="1">
    <location>
        <begin position="21"/>
        <end position="60"/>
    </location>
</feature>
<feature type="compositionally biased region" description="Low complexity" evidence="3">
    <location>
        <begin position="1"/>
        <end position="10"/>
    </location>
</feature>
<feature type="compositionally biased region" description="Low complexity" evidence="3">
    <location>
        <begin position="36"/>
        <end position="48"/>
    </location>
</feature>
<feature type="compositionally biased region" description="Acidic residues" evidence="3">
    <location>
        <begin position="49"/>
        <end position="65"/>
    </location>
</feature>
<feature type="compositionally biased region" description="Low complexity" evidence="3">
    <location>
        <begin position="78"/>
        <end position="93"/>
    </location>
</feature>
<feature type="binding site" evidence="1">
    <location>
        <begin position="148"/>
        <end position="155"/>
    </location>
    <ligand>
        <name>GTP</name>
        <dbReference type="ChEBI" id="CHEBI:37565"/>
    </ligand>
</feature>
<accession>Q54W90</accession>
<dbReference type="EC" id="3.6.5.-" evidence="1"/>
<dbReference type="EMBL" id="AAFI02000033">
    <property type="protein sequence ID" value="EAL67525.1"/>
    <property type="molecule type" value="Genomic_DNA"/>
</dbReference>
<dbReference type="RefSeq" id="XP_641502.1">
    <property type="nucleotide sequence ID" value="XM_636410.1"/>
</dbReference>
<dbReference type="SMR" id="Q54W90"/>
<dbReference type="FunCoup" id="Q54W90">
    <property type="interactions" value="52"/>
</dbReference>
<dbReference type="STRING" id="44689.Q54W90"/>
<dbReference type="GlyGen" id="Q54W90">
    <property type="glycosylation" value="1 site"/>
</dbReference>
<dbReference type="PaxDb" id="44689-DDB0206311"/>
<dbReference type="EnsemblProtists" id="EAL67525">
    <property type="protein sequence ID" value="EAL67525"/>
    <property type="gene ID" value="DDB_G0279823"/>
</dbReference>
<dbReference type="GeneID" id="8622242"/>
<dbReference type="KEGG" id="ddi:DDB_G0279823"/>
<dbReference type="dictyBase" id="DDB_G0279823">
    <property type="gene designation" value="sey1"/>
</dbReference>
<dbReference type="VEuPathDB" id="AmoebaDB:DDB_G0279823"/>
<dbReference type="eggNOG" id="KOG2203">
    <property type="taxonomic scope" value="Eukaryota"/>
</dbReference>
<dbReference type="HOGENOM" id="CLU_011270_0_0_1"/>
<dbReference type="InParanoid" id="Q54W90"/>
<dbReference type="OMA" id="PIIKMTE"/>
<dbReference type="PhylomeDB" id="Q54W90"/>
<dbReference type="PRO" id="PR:Q54W90"/>
<dbReference type="Proteomes" id="UP000002195">
    <property type="component" value="Chromosome 3"/>
</dbReference>
<dbReference type="GO" id="GO:0005789">
    <property type="term" value="C:endoplasmic reticulum membrane"/>
    <property type="evidence" value="ECO:0007669"/>
    <property type="project" value="UniProtKB-SubCell"/>
</dbReference>
<dbReference type="GO" id="GO:0140221">
    <property type="term" value="C:pathogen-containing vacuole membrane"/>
    <property type="evidence" value="ECO:0000314"/>
    <property type="project" value="dictyBase"/>
</dbReference>
<dbReference type="GO" id="GO:0020003">
    <property type="term" value="C:symbiont-containing vacuole"/>
    <property type="evidence" value="ECO:0000314"/>
    <property type="project" value="GO_Central"/>
</dbReference>
<dbReference type="GO" id="GO:0003925">
    <property type="term" value="F:G protein activity"/>
    <property type="evidence" value="ECO:0000315"/>
    <property type="project" value="dictyBase"/>
</dbReference>
<dbReference type="GO" id="GO:0005525">
    <property type="term" value="F:GTP binding"/>
    <property type="evidence" value="ECO:0007669"/>
    <property type="project" value="UniProtKB-UniRule"/>
</dbReference>
<dbReference type="GO" id="GO:0003924">
    <property type="term" value="F:GTPase activity"/>
    <property type="evidence" value="ECO:0000318"/>
    <property type="project" value="GO_Central"/>
</dbReference>
<dbReference type="GO" id="GO:0016320">
    <property type="term" value="P:endoplasmic reticulum membrane fusion"/>
    <property type="evidence" value="ECO:0000318"/>
    <property type="project" value="GO_Central"/>
</dbReference>
<dbReference type="GO" id="GO:0007029">
    <property type="term" value="P:endoplasmic reticulum organization"/>
    <property type="evidence" value="ECO:0000314"/>
    <property type="project" value="dictyBase"/>
</dbReference>
<dbReference type="GO" id="GO:0051851">
    <property type="term" value="P:host-mediated perturbation of symbiont process"/>
    <property type="evidence" value="ECO:0000315"/>
    <property type="project" value="dictyBase"/>
</dbReference>
<dbReference type="GO" id="GO:1903371">
    <property type="term" value="P:regulation of endoplasmic reticulum tubular network organization"/>
    <property type="evidence" value="ECO:0000315"/>
    <property type="project" value="dictyBase"/>
</dbReference>
<dbReference type="GO" id="GO:1900101">
    <property type="term" value="P:regulation of endoplasmic reticulum unfolded protein response"/>
    <property type="evidence" value="ECO:0000315"/>
    <property type="project" value="dictyBase"/>
</dbReference>
<dbReference type="GO" id="GO:0090182">
    <property type="term" value="P:regulation of secretion of lysosomal enzymes"/>
    <property type="evidence" value="ECO:0000315"/>
    <property type="project" value="dictyBase"/>
</dbReference>
<dbReference type="GO" id="GO:0007033">
    <property type="term" value="P:vacuole organization"/>
    <property type="evidence" value="ECO:0000315"/>
    <property type="project" value="dictyBase"/>
</dbReference>
<dbReference type="CDD" id="cd01851">
    <property type="entry name" value="GBP"/>
    <property type="match status" value="1"/>
</dbReference>
<dbReference type="FunFam" id="3.40.50.300:FF:000727">
    <property type="entry name" value="Protein SEY1 homolog"/>
    <property type="match status" value="1"/>
</dbReference>
<dbReference type="Gene3D" id="3.40.50.300">
    <property type="entry name" value="P-loop containing nucleotide triphosphate hydrolases"/>
    <property type="match status" value="1"/>
</dbReference>
<dbReference type="HAMAP" id="MF_03109">
    <property type="entry name" value="Sey1"/>
    <property type="match status" value="1"/>
</dbReference>
<dbReference type="InterPro" id="IPR030386">
    <property type="entry name" value="G_GB1_RHD3_dom"/>
</dbReference>
<dbReference type="InterPro" id="IPR027417">
    <property type="entry name" value="P-loop_NTPase"/>
</dbReference>
<dbReference type="InterPro" id="IPR008803">
    <property type="entry name" value="RHD3/Sey1"/>
</dbReference>
<dbReference type="InterPro" id="IPR046758">
    <property type="entry name" value="Sey1/RHD3-like_3HB"/>
</dbReference>
<dbReference type="PANTHER" id="PTHR45923">
    <property type="entry name" value="PROTEIN SEY1"/>
    <property type="match status" value="1"/>
</dbReference>
<dbReference type="PANTHER" id="PTHR45923:SF2">
    <property type="entry name" value="PROTEIN SEY1"/>
    <property type="match status" value="1"/>
</dbReference>
<dbReference type="Pfam" id="PF05879">
    <property type="entry name" value="RHD3_GTPase"/>
    <property type="match status" value="1"/>
</dbReference>
<dbReference type="Pfam" id="PF20428">
    <property type="entry name" value="Sey1_3HB"/>
    <property type="match status" value="1"/>
</dbReference>
<dbReference type="SUPFAM" id="SSF52540">
    <property type="entry name" value="P-loop containing nucleoside triphosphate hydrolases"/>
    <property type="match status" value="1"/>
</dbReference>
<dbReference type="PROSITE" id="PS51715">
    <property type="entry name" value="G_GB1_RHD3"/>
    <property type="match status" value="1"/>
</dbReference>
<protein>
    <recommendedName>
        <fullName evidence="1">Protein SEY1 homolog</fullName>
        <ecNumber evidence="1">3.6.5.-</ecNumber>
    </recommendedName>
</protein>
<sequence length="894" mass="104017">MSEEITTNQTVEEEQQTNQPRLSNENIKQEDEEQQVQEQQEQQQQEQQEQIDDQDTQQQEDEFVVLEETKPVEPIRPTPTLQETPQQQKQQTQEQEHEYQDIVQFIDHKGDIVKEDNKNGRTTFLSTLSNRDDFLTKGFDYSVISILGPQSSGKSTLLNLLFNTRFAVMDASTGRKQTTQGVWMGVASTTNNKNETFLILDVEGTDGRERGEDEKAFERKTSLFSLALSSVLIINMWAHDIGRYNAANISLLKTVFELNLQLFQKKRNHKILIFFLIRDHDGVTPLERLKATLMEDITKLWTDLQKPEEFVGTRESDFFDFEFTTLPHKIYSPTAFLGQVEQLKQRFSDSGADSFIPKRKYRNDDIPADGFYQFSYQVWETIKSNRDLDLPSQKEMLALYRCDEFVEQSMTQFTRDIKPIKEHIERGRIQEQFGEKSKRILDQSLSVYDEPAQRYHLETVQKKRQVLTDRILTELKYLFDKQMERLNENTLVFYNSLIKEFTDSNTGSSSGSGNNNNKKRDGSSVLLTAASVGIIPQFSTWSNGIKKKSIEYFEIVANQSIVPGSDWSFENDLEQLKIKIDKELSILKENQLVRLSKLMRDKTFQQELTPLLTKITEQAPNNMWQKIKTYYDDALSSNEKEFRDRLVDFQLDEQKVNELINKFREQLADGLKNKITERAEFLQMRMRKRFEEKFNMDNRNLPRKWTKTDDIASIFQDARQNAEKLIDLFSYLRLDEEDSNVSFFKRLDNDEHEENTMVNSSKIIIPYKDCCLACENFRLTIKSDYMQALSEQNRLTSGGGVPGYMIILLCVLGFNEFISIISSPLLLLLTILLGGVGFVLFKLGLAGPFIDYSSQILVHFISKVKDIVLHVEQLQEQNHNNNNNNNNTPKQKRE</sequence>
<reference key="1">
    <citation type="journal article" date="2005" name="Nature">
        <title>The genome of the social amoeba Dictyostelium discoideum.</title>
        <authorList>
            <person name="Eichinger L."/>
            <person name="Pachebat J.A."/>
            <person name="Gloeckner G."/>
            <person name="Rajandream M.A."/>
            <person name="Sucgang R."/>
            <person name="Berriman M."/>
            <person name="Song J."/>
            <person name="Olsen R."/>
            <person name="Szafranski K."/>
            <person name="Xu Q."/>
            <person name="Tunggal B."/>
            <person name="Kummerfeld S."/>
            <person name="Madera M."/>
            <person name="Konfortov B.A."/>
            <person name="Rivero F."/>
            <person name="Bankier A.T."/>
            <person name="Lehmann R."/>
            <person name="Hamlin N."/>
            <person name="Davies R."/>
            <person name="Gaudet P."/>
            <person name="Fey P."/>
            <person name="Pilcher K."/>
            <person name="Chen G."/>
            <person name="Saunders D."/>
            <person name="Sodergren E.J."/>
            <person name="Davis P."/>
            <person name="Kerhornou A."/>
            <person name="Nie X."/>
            <person name="Hall N."/>
            <person name="Anjard C."/>
            <person name="Hemphill L."/>
            <person name="Bason N."/>
            <person name="Farbrother P."/>
            <person name="Desany B."/>
            <person name="Just E."/>
            <person name="Morio T."/>
            <person name="Rost R."/>
            <person name="Churcher C.M."/>
            <person name="Cooper J."/>
            <person name="Haydock S."/>
            <person name="van Driessche N."/>
            <person name="Cronin A."/>
            <person name="Goodhead I."/>
            <person name="Muzny D.M."/>
            <person name="Mourier T."/>
            <person name="Pain A."/>
            <person name="Lu M."/>
            <person name="Harper D."/>
            <person name="Lindsay R."/>
            <person name="Hauser H."/>
            <person name="James K.D."/>
            <person name="Quiles M."/>
            <person name="Madan Babu M."/>
            <person name="Saito T."/>
            <person name="Buchrieser C."/>
            <person name="Wardroper A."/>
            <person name="Felder M."/>
            <person name="Thangavelu M."/>
            <person name="Johnson D."/>
            <person name="Knights A."/>
            <person name="Loulseged H."/>
            <person name="Mungall K.L."/>
            <person name="Oliver K."/>
            <person name="Price C."/>
            <person name="Quail M.A."/>
            <person name="Urushihara H."/>
            <person name="Hernandez J."/>
            <person name="Rabbinowitsch E."/>
            <person name="Steffen D."/>
            <person name="Sanders M."/>
            <person name="Ma J."/>
            <person name="Kohara Y."/>
            <person name="Sharp S."/>
            <person name="Simmonds M.N."/>
            <person name="Spiegler S."/>
            <person name="Tivey A."/>
            <person name="Sugano S."/>
            <person name="White B."/>
            <person name="Walker D."/>
            <person name="Woodward J.R."/>
            <person name="Winckler T."/>
            <person name="Tanaka Y."/>
            <person name="Shaulsky G."/>
            <person name="Schleicher M."/>
            <person name="Weinstock G.M."/>
            <person name="Rosenthal A."/>
            <person name="Cox E.C."/>
            <person name="Chisholm R.L."/>
            <person name="Gibbs R.A."/>
            <person name="Loomis W.F."/>
            <person name="Platzer M."/>
            <person name="Kay R.R."/>
            <person name="Williams J.G."/>
            <person name="Dear P.H."/>
            <person name="Noegel A.A."/>
            <person name="Barrell B.G."/>
            <person name="Kuspa A."/>
        </authorList>
    </citation>
    <scope>NUCLEOTIDE SEQUENCE [LARGE SCALE GENOMIC DNA]</scope>
    <source>
        <strain>AX4</strain>
    </source>
</reference>
<evidence type="ECO:0000255" key="1">
    <source>
        <dbReference type="HAMAP-Rule" id="MF_03109"/>
    </source>
</evidence>
<evidence type="ECO:0000255" key="2">
    <source>
        <dbReference type="PROSITE-ProRule" id="PRU01052"/>
    </source>
</evidence>
<evidence type="ECO:0000256" key="3">
    <source>
        <dbReference type="SAM" id="MobiDB-lite"/>
    </source>
</evidence>
<comment type="function">
    <text evidence="1">Probable GTP-binding protein that may be involved in cell development.</text>
</comment>
<comment type="subcellular location">
    <subcellularLocation>
        <location evidence="1">Endoplasmic reticulum membrane</location>
        <topology evidence="1">Multi-pass membrane protein</topology>
    </subcellularLocation>
</comment>
<comment type="similarity">
    <text evidence="2">Belongs to the TRAFAC class dynamin-like GTPase superfamily. GB1/RHD3 GTPase family. RHD3 subfamily.</text>
</comment>
<proteinExistence type="inferred from homology"/>
<organism>
    <name type="scientific">Dictyostelium discoideum</name>
    <name type="common">Social amoeba</name>
    <dbReference type="NCBI Taxonomy" id="44689"/>
    <lineage>
        <taxon>Eukaryota</taxon>
        <taxon>Amoebozoa</taxon>
        <taxon>Evosea</taxon>
        <taxon>Eumycetozoa</taxon>
        <taxon>Dictyostelia</taxon>
        <taxon>Dictyosteliales</taxon>
        <taxon>Dictyosteliaceae</taxon>
        <taxon>Dictyostelium</taxon>
    </lineage>
</organism>
<name>SEY1_DICDI</name>
<gene>
    <name type="ORF">DDB_0206311</name>
</gene>
<keyword id="KW-0175">Coiled coil</keyword>
<keyword id="KW-0256">Endoplasmic reticulum</keyword>
<keyword id="KW-0342">GTP-binding</keyword>
<keyword id="KW-0378">Hydrolase</keyword>
<keyword id="KW-0472">Membrane</keyword>
<keyword id="KW-0547">Nucleotide-binding</keyword>
<keyword id="KW-1185">Reference proteome</keyword>
<keyword id="KW-0812">Transmembrane</keyword>
<keyword id="KW-1133">Transmembrane helix</keyword>